<evidence type="ECO:0000255" key="1">
    <source>
        <dbReference type="HAMAP-Rule" id="MF_01347"/>
    </source>
</evidence>
<gene>
    <name evidence="1" type="primary">atpD</name>
    <name type="ordered locus">LCK_01627</name>
</gene>
<reference key="1">
    <citation type="journal article" date="2008" name="J. Bacteriol.">
        <title>Complete genome sequence of Leuconostoc citreum KM20.</title>
        <authorList>
            <person name="Kim J.F."/>
            <person name="Jeong H."/>
            <person name="Lee J.-S."/>
            <person name="Choi S.-H."/>
            <person name="Ha M."/>
            <person name="Hur C.-G."/>
            <person name="Kim J.-S."/>
            <person name="Lee S."/>
            <person name="Park H.-S."/>
            <person name="Park Y.-H."/>
            <person name="Oh T.K."/>
        </authorList>
    </citation>
    <scope>NUCLEOTIDE SEQUENCE [LARGE SCALE GENOMIC DNA]</scope>
    <source>
        <strain>KM20</strain>
    </source>
</reference>
<feature type="chain" id="PRO_1000143522" description="ATP synthase subunit beta">
    <location>
        <begin position="1"/>
        <end position="466"/>
    </location>
</feature>
<feature type="binding site" evidence="1">
    <location>
        <begin position="153"/>
        <end position="160"/>
    </location>
    <ligand>
        <name>ATP</name>
        <dbReference type="ChEBI" id="CHEBI:30616"/>
    </ligand>
</feature>
<comment type="function">
    <text evidence="1">Produces ATP from ADP in the presence of a proton gradient across the membrane. The catalytic sites are hosted primarily by the beta subunits.</text>
</comment>
<comment type="catalytic activity">
    <reaction evidence="1">
        <text>ATP + H2O + 4 H(+)(in) = ADP + phosphate + 5 H(+)(out)</text>
        <dbReference type="Rhea" id="RHEA:57720"/>
        <dbReference type="ChEBI" id="CHEBI:15377"/>
        <dbReference type="ChEBI" id="CHEBI:15378"/>
        <dbReference type="ChEBI" id="CHEBI:30616"/>
        <dbReference type="ChEBI" id="CHEBI:43474"/>
        <dbReference type="ChEBI" id="CHEBI:456216"/>
        <dbReference type="EC" id="7.1.2.2"/>
    </reaction>
</comment>
<comment type="subunit">
    <text evidence="1">F-type ATPases have 2 components, CF(1) - the catalytic core - and CF(0) - the membrane proton channel. CF(1) has five subunits: alpha(3), beta(3), gamma(1), delta(1), epsilon(1). CF(0) has three main subunits: a(1), b(2) and c(9-12). The alpha and beta chains form an alternating ring which encloses part of the gamma chain. CF(1) is attached to CF(0) by a central stalk formed by the gamma and epsilon chains, while a peripheral stalk is formed by the delta and b chains.</text>
</comment>
<comment type="subcellular location">
    <subcellularLocation>
        <location evidence="1">Cell membrane</location>
        <topology evidence="1">Peripheral membrane protein</topology>
    </subcellularLocation>
</comment>
<comment type="similarity">
    <text evidence="1">Belongs to the ATPase alpha/beta chains family.</text>
</comment>
<accession>B1MW85</accession>
<sequence>MSTGKVVQVIGPVVDVAFESGQQVPDINNALKIDKGDGQTLTVEVSLALGDGIVRTIAMDSTDGLQRGMSVTDTGDAIKVPVGEATLGRVFNVLGEPVDNNGEIAAETPRHSIHRDAPSYDDLANSTEILETGIKVIDLLAPYVRGGKIGLFGGAGVGKTVLIQELIHNIAQGHNGISVFTGVGERTREGNDMYHEMAESGVLKQTAMVYGQMNEPPGARMRVALTGLTMAENFRDSEGKDVLLFIDNIFRFTQAGSEVSALLGRIPSAVGYQPTLATEMGQLQERITSTKKGSVTSIQAVYVPADDYTDPAPATTFAHLDATTNLERALTQQGIYPAVDPLASTSSALDPQVVGQEHYEVATEVQRTLQRYRELQDIISILGMDELSDEEKTTVNRARRIQFFLSQPFSVAETFTGINGEYVPVAETVRSFKEILDGKYDDLPEDAFRNVGAIEQVVEKAKTMAQ</sequence>
<proteinExistence type="inferred from homology"/>
<organism>
    <name type="scientific">Leuconostoc citreum (strain KM20)</name>
    <dbReference type="NCBI Taxonomy" id="349519"/>
    <lineage>
        <taxon>Bacteria</taxon>
        <taxon>Bacillati</taxon>
        <taxon>Bacillota</taxon>
        <taxon>Bacilli</taxon>
        <taxon>Lactobacillales</taxon>
        <taxon>Lactobacillaceae</taxon>
        <taxon>Leuconostoc</taxon>
    </lineage>
</organism>
<dbReference type="EC" id="7.1.2.2" evidence="1"/>
<dbReference type="EMBL" id="DQ489736">
    <property type="protein sequence ID" value="ACA83450.1"/>
    <property type="molecule type" value="Genomic_DNA"/>
</dbReference>
<dbReference type="RefSeq" id="WP_004902054.1">
    <property type="nucleotide sequence ID" value="NC_010471.1"/>
</dbReference>
<dbReference type="SMR" id="B1MW85"/>
<dbReference type="STRING" id="349519.LCK_01627"/>
<dbReference type="GeneID" id="61103189"/>
<dbReference type="KEGG" id="lci:LCK_01627"/>
<dbReference type="eggNOG" id="COG0055">
    <property type="taxonomic scope" value="Bacteria"/>
</dbReference>
<dbReference type="HOGENOM" id="CLU_022398_0_2_9"/>
<dbReference type="OrthoDB" id="9801639at2"/>
<dbReference type="Proteomes" id="UP000002166">
    <property type="component" value="Chromosome"/>
</dbReference>
<dbReference type="GO" id="GO:0005886">
    <property type="term" value="C:plasma membrane"/>
    <property type="evidence" value="ECO:0007669"/>
    <property type="project" value="UniProtKB-SubCell"/>
</dbReference>
<dbReference type="GO" id="GO:0045259">
    <property type="term" value="C:proton-transporting ATP synthase complex"/>
    <property type="evidence" value="ECO:0007669"/>
    <property type="project" value="UniProtKB-KW"/>
</dbReference>
<dbReference type="GO" id="GO:0005524">
    <property type="term" value="F:ATP binding"/>
    <property type="evidence" value="ECO:0007669"/>
    <property type="project" value="UniProtKB-UniRule"/>
</dbReference>
<dbReference type="GO" id="GO:0016887">
    <property type="term" value="F:ATP hydrolysis activity"/>
    <property type="evidence" value="ECO:0007669"/>
    <property type="project" value="InterPro"/>
</dbReference>
<dbReference type="GO" id="GO:0046933">
    <property type="term" value="F:proton-transporting ATP synthase activity, rotational mechanism"/>
    <property type="evidence" value="ECO:0007669"/>
    <property type="project" value="UniProtKB-UniRule"/>
</dbReference>
<dbReference type="CDD" id="cd18110">
    <property type="entry name" value="ATP-synt_F1_beta_C"/>
    <property type="match status" value="1"/>
</dbReference>
<dbReference type="CDD" id="cd18115">
    <property type="entry name" value="ATP-synt_F1_beta_N"/>
    <property type="match status" value="1"/>
</dbReference>
<dbReference type="CDD" id="cd01133">
    <property type="entry name" value="F1-ATPase_beta_CD"/>
    <property type="match status" value="1"/>
</dbReference>
<dbReference type="FunFam" id="1.10.1140.10:FF:000001">
    <property type="entry name" value="ATP synthase subunit beta"/>
    <property type="match status" value="1"/>
</dbReference>
<dbReference type="FunFam" id="2.40.10.170:FF:000005">
    <property type="entry name" value="ATP synthase subunit beta"/>
    <property type="match status" value="1"/>
</dbReference>
<dbReference type="FunFam" id="3.40.50.300:FF:000004">
    <property type="entry name" value="ATP synthase subunit beta"/>
    <property type="match status" value="1"/>
</dbReference>
<dbReference type="Gene3D" id="2.40.10.170">
    <property type="match status" value="1"/>
</dbReference>
<dbReference type="Gene3D" id="1.10.1140.10">
    <property type="entry name" value="Bovine Mitochondrial F1-atpase, Atp Synthase Beta Chain, Chain D, domain 3"/>
    <property type="match status" value="1"/>
</dbReference>
<dbReference type="Gene3D" id="3.40.50.300">
    <property type="entry name" value="P-loop containing nucleotide triphosphate hydrolases"/>
    <property type="match status" value="1"/>
</dbReference>
<dbReference type="HAMAP" id="MF_01347">
    <property type="entry name" value="ATP_synth_beta_bact"/>
    <property type="match status" value="1"/>
</dbReference>
<dbReference type="InterPro" id="IPR003593">
    <property type="entry name" value="AAA+_ATPase"/>
</dbReference>
<dbReference type="InterPro" id="IPR055190">
    <property type="entry name" value="ATP-synt_VA_C"/>
</dbReference>
<dbReference type="InterPro" id="IPR005722">
    <property type="entry name" value="ATP_synth_F1_bsu"/>
</dbReference>
<dbReference type="InterPro" id="IPR020003">
    <property type="entry name" value="ATPase_a/bsu_AS"/>
</dbReference>
<dbReference type="InterPro" id="IPR050053">
    <property type="entry name" value="ATPase_alpha/beta_chains"/>
</dbReference>
<dbReference type="InterPro" id="IPR004100">
    <property type="entry name" value="ATPase_F1/V1/A1_a/bsu_N"/>
</dbReference>
<dbReference type="InterPro" id="IPR036121">
    <property type="entry name" value="ATPase_F1/V1/A1_a/bsu_N_sf"/>
</dbReference>
<dbReference type="InterPro" id="IPR000194">
    <property type="entry name" value="ATPase_F1/V1/A1_a/bsu_nucl-bd"/>
</dbReference>
<dbReference type="InterPro" id="IPR024034">
    <property type="entry name" value="ATPase_F1/V1_b/a_C"/>
</dbReference>
<dbReference type="InterPro" id="IPR027417">
    <property type="entry name" value="P-loop_NTPase"/>
</dbReference>
<dbReference type="NCBIfam" id="TIGR01039">
    <property type="entry name" value="atpD"/>
    <property type="match status" value="1"/>
</dbReference>
<dbReference type="PANTHER" id="PTHR15184">
    <property type="entry name" value="ATP SYNTHASE"/>
    <property type="match status" value="1"/>
</dbReference>
<dbReference type="PANTHER" id="PTHR15184:SF71">
    <property type="entry name" value="ATP SYNTHASE SUBUNIT BETA, MITOCHONDRIAL"/>
    <property type="match status" value="1"/>
</dbReference>
<dbReference type="Pfam" id="PF00006">
    <property type="entry name" value="ATP-synt_ab"/>
    <property type="match status" value="1"/>
</dbReference>
<dbReference type="Pfam" id="PF02874">
    <property type="entry name" value="ATP-synt_ab_N"/>
    <property type="match status" value="1"/>
</dbReference>
<dbReference type="Pfam" id="PF22919">
    <property type="entry name" value="ATP-synt_VA_C"/>
    <property type="match status" value="1"/>
</dbReference>
<dbReference type="SMART" id="SM00382">
    <property type="entry name" value="AAA"/>
    <property type="match status" value="1"/>
</dbReference>
<dbReference type="SUPFAM" id="SSF47917">
    <property type="entry name" value="C-terminal domain of alpha and beta subunits of F1 ATP synthase"/>
    <property type="match status" value="1"/>
</dbReference>
<dbReference type="SUPFAM" id="SSF50615">
    <property type="entry name" value="N-terminal domain of alpha and beta subunits of F1 ATP synthase"/>
    <property type="match status" value="1"/>
</dbReference>
<dbReference type="SUPFAM" id="SSF52540">
    <property type="entry name" value="P-loop containing nucleoside triphosphate hydrolases"/>
    <property type="match status" value="1"/>
</dbReference>
<dbReference type="PROSITE" id="PS00152">
    <property type="entry name" value="ATPASE_ALPHA_BETA"/>
    <property type="match status" value="1"/>
</dbReference>
<keyword id="KW-0066">ATP synthesis</keyword>
<keyword id="KW-0067">ATP-binding</keyword>
<keyword id="KW-1003">Cell membrane</keyword>
<keyword id="KW-0139">CF(1)</keyword>
<keyword id="KW-0375">Hydrogen ion transport</keyword>
<keyword id="KW-0406">Ion transport</keyword>
<keyword id="KW-0472">Membrane</keyword>
<keyword id="KW-0547">Nucleotide-binding</keyword>
<keyword id="KW-1185">Reference proteome</keyword>
<keyword id="KW-1278">Translocase</keyword>
<keyword id="KW-0813">Transport</keyword>
<protein>
    <recommendedName>
        <fullName evidence="1">ATP synthase subunit beta</fullName>
        <ecNumber evidence="1">7.1.2.2</ecNumber>
    </recommendedName>
    <alternativeName>
        <fullName evidence="1">ATP synthase F1 sector subunit beta</fullName>
    </alternativeName>
    <alternativeName>
        <fullName evidence="1">F-ATPase subunit beta</fullName>
    </alternativeName>
</protein>
<name>ATPB_LEUCK</name>